<organism>
    <name type="scientific">Cronobacter sakazakii (strain ATCC BAA-894)</name>
    <name type="common">Enterobacter sakazakii</name>
    <dbReference type="NCBI Taxonomy" id="290339"/>
    <lineage>
        <taxon>Bacteria</taxon>
        <taxon>Pseudomonadati</taxon>
        <taxon>Pseudomonadota</taxon>
        <taxon>Gammaproteobacteria</taxon>
        <taxon>Enterobacterales</taxon>
        <taxon>Enterobacteriaceae</taxon>
        <taxon>Cronobacter</taxon>
    </lineage>
</organism>
<reference key="1">
    <citation type="journal article" date="2010" name="PLoS ONE">
        <title>Genome sequence of Cronobacter sakazakii BAA-894 and comparative genomic hybridization analysis with other Cronobacter species.</title>
        <authorList>
            <person name="Kucerova E."/>
            <person name="Clifton S.W."/>
            <person name="Xia X.Q."/>
            <person name="Long F."/>
            <person name="Porwollik S."/>
            <person name="Fulton L."/>
            <person name="Fronick C."/>
            <person name="Minx P."/>
            <person name="Kyung K."/>
            <person name="Warren W."/>
            <person name="Fulton R."/>
            <person name="Feng D."/>
            <person name="Wollam A."/>
            <person name="Shah N."/>
            <person name="Bhonagiri V."/>
            <person name="Nash W.E."/>
            <person name="Hallsworth-Pepin K."/>
            <person name="Wilson R.K."/>
            <person name="McClelland M."/>
            <person name="Forsythe S.J."/>
        </authorList>
    </citation>
    <scope>NUCLEOTIDE SEQUENCE [LARGE SCALE GENOMIC DNA]</scope>
    <source>
        <strain>ATCC BAA-894</strain>
    </source>
</reference>
<accession>A7MQT6</accession>
<gene>
    <name evidence="1" type="primary">nagB</name>
    <name type="ordered locus">ESA_02661</name>
</gene>
<sequence>MRLIPLATPQQVGKWAARHIVKRINDFNPTADRPFVLGLPTGGTPLEAYKALIEMHKAGQVSFKHVVTFNMDEYVGLPKDHPESYHSFMYRNFFDHVDIPEENINLLDGNAPDIDAECRRYEEKIRAYGKIHLFMGGVGNDGHIAFNEPASSLASRTRIKTLTHDTRVANSRFFGGDVNQVPKYALTVGVGTLLDAQEVMILVLGHVKAQALQAAVEGNVNHMWTISCLQLHPKAVIVCDEPSTMELKVKTLKYFTELEAENIKDL</sequence>
<feature type="chain" id="PRO_1000066983" description="Glucosamine-6-phosphate deaminase">
    <location>
        <begin position="1"/>
        <end position="266"/>
    </location>
</feature>
<feature type="active site" description="Proton acceptor; for enolization step" evidence="1">
    <location>
        <position position="72"/>
    </location>
</feature>
<feature type="active site" description="For ring-opening step" evidence="1">
    <location>
        <position position="141"/>
    </location>
</feature>
<feature type="active site" description="Proton acceptor; for ring-opening step" evidence="1">
    <location>
        <position position="143"/>
    </location>
</feature>
<feature type="active site" description="For ring-opening step" evidence="1">
    <location>
        <position position="148"/>
    </location>
</feature>
<feature type="site" description="Part of the allosteric site" evidence="1">
    <location>
        <position position="151"/>
    </location>
</feature>
<feature type="site" description="Part of the allosteric site" evidence="1">
    <location>
        <position position="158"/>
    </location>
</feature>
<feature type="site" description="Part of the allosteric site" evidence="1">
    <location>
        <position position="160"/>
    </location>
</feature>
<feature type="site" description="Part of the allosteric site" evidence="1">
    <location>
        <position position="161"/>
    </location>
</feature>
<feature type="site" description="Part of the allosteric site" evidence="1">
    <location>
        <position position="254"/>
    </location>
</feature>
<evidence type="ECO:0000255" key="1">
    <source>
        <dbReference type="HAMAP-Rule" id="MF_01241"/>
    </source>
</evidence>
<name>NAGB_CROS8</name>
<protein>
    <recommendedName>
        <fullName evidence="1">Glucosamine-6-phosphate deaminase</fullName>
        <ecNumber evidence="1">3.5.99.6</ecNumber>
    </recommendedName>
    <alternativeName>
        <fullName evidence="1">GlcN6P deaminase</fullName>
        <shortName evidence="1">GNPDA</shortName>
    </alternativeName>
    <alternativeName>
        <fullName evidence="1">Glucosamine-6-phosphate isomerase</fullName>
    </alternativeName>
</protein>
<keyword id="KW-0021">Allosteric enzyme</keyword>
<keyword id="KW-0119">Carbohydrate metabolism</keyword>
<keyword id="KW-0378">Hydrolase</keyword>
<keyword id="KW-1185">Reference proteome</keyword>
<proteinExistence type="inferred from homology"/>
<dbReference type="EC" id="3.5.99.6" evidence="1"/>
<dbReference type="EMBL" id="CP000783">
    <property type="protein sequence ID" value="ABU77901.1"/>
    <property type="molecule type" value="Genomic_DNA"/>
</dbReference>
<dbReference type="RefSeq" id="WP_007670385.1">
    <property type="nucleotide sequence ID" value="NC_009778.1"/>
</dbReference>
<dbReference type="SMR" id="A7MQT6"/>
<dbReference type="GeneID" id="56731456"/>
<dbReference type="KEGG" id="esa:ESA_02661"/>
<dbReference type="HOGENOM" id="CLU_049611_0_1_6"/>
<dbReference type="UniPathway" id="UPA00629">
    <property type="reaction ID" value="UER00684"/>
</dbReference>
<dbReference type="Proteomes" id="UP000000260">
    <property type="component" value="Chromosome"/>
</dbReference>
<dbReference type="GO" id="GO:0005737">
    <property type="term" value="C:cytoplasm"/>
    <property type="evidence" value="ECO:0007669"/>
    <property type="project" value="TreeGrafter"/>
</dbReference>
<dbReference type="GO" id="GO:0004342">
    <property type="term" value="F:glucosamine-6-phosphate deaminase activity"/>
    <property type="evidence" value="ECO:0007669"/>
    <property type="project" value="UniProtKB-UniRule"/>
</dbReference>
<dbReference type="GO" id="GO:0042802">
    <property type="term" value="F:identical protein binding"/>
    <property type="evidence" value="ECO:0007669"/>
    <property type="project" value="TreeGrafter"/>
</dbReference>
<dbReference type="GO" id="GO:0005975">
    <property type="term" value="P:carbohydrate metabolic process"/>
    <property type="evidence" value="ECO:0007669"/>
    <property type="project" value="InterPro"/>
</dbReference>
<dbReference type="GO" id="GO:0006043">
    <property type="term" value="P:glucosamine catabolic process"/>
    <property type="evidence" value="ECO:0007669"/>
    <property type="project" value="TreeGrafter"/>
</dbReference>
<dbReference type="GO" id="GO:0006046">
    <property type="term" value="P:N-acetylglucosamine catabolic process"/>
    <property type="evidence" value="ECO:0007669"/>
    <property type="project" value="TreeGrafter"/>
</dbReference>
<dbReference type="GO" id="GO:0019262">
    <property type="term" value="P:N-acetylneuraminate catabolic process"/>
    <property type="evidence" value="ECO:0007669"/>
    <property type="project" value="UniProtKB-UniRule"/>
</dbReference>
<dbReference type="CDD" id="cd01399">
    <property type="entry name" value="GlcN6P_deaminase"/>
    <property type="match status" value="1"/>
</dbReference>
<dbReference type="FunFam" id="3.40.50.1360:FF:000002">
    <property type="entry name" value="Glucosamine-6-phosphate deaminase"/>
    <property type="match status" value="1"/>
</dbReference>
<dbReference type="Gene3D" id="3.40.50.1360">
    <property type="match status" value="1"/>
</dbReference>
<dbReference type="HAMAP" id="MF_01241">
    <property type="entry name" value="GlcN6P_deamin"/>
    <property type="match status" value="1"/>
</dbReference>
<dbReference type="InterPro" id="IPR006148">
    <property type="entry name" value="Glc/Gal-6P_isomerase"/>
</dbReference>
<dbReference type="InterPro" id="IPR004547">
    <property type="entry name" value="Glucosamine6P_isomerase"/>
</dbReference>
<dbReference type="InterPro" id="IPR018321">
    <property type="entry name" value="Glucosamine6P_isomerase_CS"/>
</dbReference>
<dbReference type="InterPro" id="IPR037171">
    <property type="entry name" value="NagB/RpiA_transferase-like"/>
</dbReference>
<dbReference type="NCBIfam" id="TIGR00502">
    <property type="entry name" value="nagB"/>
    <property type="match status" value="1"/>
</dbReference>
<dbReference type="NCBIfam" id="NF001685">
    <property type="entry name" value="PRK00443.1-5"/>
    <property type="match status" value="1"/>
</dbReference>
<dbReference type="PANTHER" id="PTHR11280">
    <property type="entry name" value="GLUCOSAMINE-6-PHOSPHATE ISOMERASE"/>
    <property type="match status" value="1"/>
</dbReference>
<dbReference type="PANTHER" id="PTHR11280:SF5">
    <property type="entry name" value="GLUCOSAMINE-6-PHOSPHATE ISOMERASE"/>
    <property type="match status" value="1"/>
</dbReference>
<dbReference type="Pfam" id="PF01182">
    <property type="entry name" value="Glucosamine_iso"/>
    <property type="match status" value="1"/>
</dbReference>
<dbReference type="SUPFAM" id="SSF100950">
    <property type="entry name" value="NagB/RpiA/CoA transferase-like"/>
    <property type="match status" value="1"/>
</dbReference>
<dbReference type="PROSITE" id="PS01161">
    <property type="entry name" value="GLC_GALNAC_ISOMERASE"/>
    <property type="match status" value="1"/>
</dbReference>
<comment type="function">
    <text evidence="1">Catalyzes the reversible isomerization-deamination of glucosamine 6-phosphate (GlcN6P) to form fructose 6-phosphate (Fru6P) and ammonium ion.</text>
</comment>
<comment type="catalytic activity">
    <reaction evidence="1">
        <text>alpha-D-glucosamine 6-phosphate + H2O = beta-D-fructose 6-phosphate + NH4(+)</text>
        <dbReference type="Rhea" id="RHEA:12172"/>
        <dbReference type="ChEBI" id="CHEBI:15377"/>
        <dbReference type="ChEBI" id="CHEBI:28938"/>
        <dbReference type="ChEBI" id="CHEBI:57634"/>
        <dbReference type="ChEBI" id="CHEBI:75989"/>
        <dbReference type="EC" id="3.5.99.6"/>
    </reaction>
</comment>
<comment type="activity regulation">
    <text evidence="1">Allosterically activated by N-acetylglucosamine 6-phosphate (GlcNAc6P).</text>
</comment>
<comment type="pathway">
    <text evidence="1">Amino-sugar metabolism; N-acetylneuraminate degradation; D-fructose 6-phosphate from N-acetylneuraminate: step 5/5.</text>
</comment>
<comment type="subunit">
    <text evidence="1">Homohexamer.</text>
</comment>
<comment type="similarity">
    <text evidence="1">Belongs to the glucosamine/galactosamine-6-phosphate isomerase family. NagB subfamily.</text>
</comment>